<feature type="chain" id="PRO_0000116032" description="Nuclear egress protein 2">
    <location>
        <begin position="1"/>
        <end position="235"/>
    </location>
</feature>
<feature type="topological domain" description="Perinuclear space" evidence="1">
    <location>
        <begin position="1"/>
        <end position="214"/>
    </location>
</feature>
<feature type="transmembrane region" description="Helical" evidence="1">
    <location>
        <begin position="215"/>
        <end position="232"/>
    </location>
</feature>
<feature type="topological domain" description="Nuclear" evidence="1">
    <location>
        <begin position="233"/>
        <end position="235"/>
    </location>
</feature>
<gene>
    <name evidence="1" type="primary">NEC2</name>
    <name type="ordered locus">67</name>
    <name type="ordered locus">ECLF5</name>
</gene>
<protein>
    <recommendedName>
        <fullName evidence="1">Nuclear egress protein 2</fullName>
    </recommendedName>
</protein>
<organismHost>
    <name type="scientific">Saimiri sciureus</name>
    <name type="common">Common squirrel monkey</name>
    <dbReference type="NCBI Taxonomy" id="9521"/>
</organismHost>
<name>NEC2_SHV21</name>
<accession>Q01045</accession>
<comment type="function">
    <text evidence="1">Plays an essential role in virion nuclear egress, the first step of virion release from infected cell. Within the host nucleus, NEC1 interacts with the newly formed capsid through the vertexes and directs it to the inner nuclear membrane by associating with NEC2. Induces the budding of the capsid at the inner nuclear membrane as well as its envelopment into the perinuclear space. There, the NEC1/NEC2 complex promotes the fusion of the enveloped capsid with the outer nuclear membrane and the subsequent release of the viral capsid into the cytoplasm where it will reach the secondary budding sites in the host Golgi or trans-Golgi network.</text>
</comment>
<comment type="subunit">
    <text evidence="1">Forms a heterohexameric complex with NEC1.</text>
</comment>
<comment type="subcellular location">
    <subcellularLocation>
        <location evidence="1">Host nucleus inner membrane</location>
        <topology evidence="1">Single-pass membrane protein</topology>
    </subcellularLocation>
    <text evidence="1">Also localizes at the transient membrane of perinuclear virions.</text>
</comment>
<comment type="PTM">
    <text evidence="1">Phosphorylated.</text>
</comment>
<comment type="similarity">
    <text evidence="1">Belongs to the herpesviridae NEC2 protein family.</text>
</comment>
<dbReference type="EMBL" id="X64346">
    <property type="protein sequence ID" value="CAA45690.1"/>
    <property type="molecule type" value="Genomic_DNA"/>
</dbReference>
<dbReference type="EMBL" id="M86409">
    <property type="protein sequence ID" value="AAA46143.1"/>
    <property type="molecule type" value="Genomic_DNA"/>
</dbReference>
<dbReference type="RefSeq" id="NP_040269.1">
    <property type="nucleotide sequence ID" value="NC_001350.1"/>
</dbReference>
<dbReference type="SMR" id="Q01045"/>
<dbReference type="KEGG" id="vg:1682481"/>
<dbReference type="Proteomes" id="UP000000587">
    <property type="component" value="Segment"/>
</dbReference>
<dbReference type="GO" id="GO:0044201">
    <property type="term" value="C:host cell nuclear inner membrane"/>
    <property type="evidence" value="ECO:0007669"/>
    <property type="project" value="UniProtKB-SubCell"/>
</dbReference>
<dbReference type="GO" id="GO:0016020">
    <property type="term" value="C:membrane"/>
    <property type="evidence" value="ECO:0007669"/>
    <property type="project" value="UniProtKB-KW"/>
</dbReference>
<dbReference type="HAMAP" id="MF_04024">
    <property type="entry name" value="HSV_NEC2"/>
    <property type="match status" value="1"/>
</dbReference>
<dbReference type="InterPro" id="IPR007626">
    <property type="entry name" value="Herpesvirus_viron_egress-type"/>
</dbReference>
<dbReference type="Pfam" id="PF04541">
    <property type="entry name" value="Herpes_U34"/>
    <property type="match status" value="1"/>
</dbReference>
<sequence>MNSTRLVYELCDIVNLYLCQPGVQIDVDRCASGPHVFTKGGTEAICTVKLSHGLVYNIEFVYKFWAHKLESVKYPFSPCFIISNNGLATTLKCFLSRPRNVNHFGHVLNIDSDVYLTKNTSVILSQDDFVKFKTNLVFSKDLDVFHSMVVFRTYLIEHRQALQFLVVKPRSSKRVNSILSSVAKTASQNFILDPPRRSEETRVCIKPWTLSKKNIWTIILSLVAVVAIILKWREL</sequence>
<organism>
    <name type="scientific">Saimiriine herpesvirus 2 (strain 11)</name>
    <name type="common">SaHV-2</name>
    <name type="synonym">Herpesvirus saimiri</name>
    <dbReference type="NCBI Taxonomy" id="10383"/>
    <lineage>
        <taxon>Viruses</taxon>
        <taxon>Duplodnaviria</taxon>
        <taxon>Heunggongvirae</taxon>
        <taxon>Peploviricota</taxon>
        <taxon>Herviviricetes</taxon>
        <taxon>Herpesvirales</taxon>
        <taxon>Orthoherpesviridae</taxon>
        <taxon>Gammaherpesvirinae</taxon>
        <taxon>Rhadinovirus</taxon>
        <taxon>Rhadinovirus saimiriinegamma2</taxon>
        <taxon>Saimiriine herpesvirus 2</taxon>
    </lineage>
</organism>
<keyword id="KW-1043">Host membrane</keyword>
<keyword id="KW-1048">Host nucleus</keyword>
<keyword id="KW-0426">Late protein</keyword>
<keyword id="KW-0472">Membrane</keyword>
<keyword id="KW-0597">Phosphoprotein</keyword>
<keyword id="KW-1185">Reference proteome</keyword>
<keyword id="KW-0812">Transmembrane</keyword>
<keyword id="KW-1133">Transmembrane helix</keyword>
<proteinExistence type="inferred from homology"/>
<evidence type="ECO:0000255" key="1">
    <source>
        <dbReference type="HAMAP-Rule" id="MF_04024"/>
    </source>
</evidence>
<reference key="1">
    <citation type="journal article" date="1992" name="J. Virol.">
        <title>Primary structure of the herpesvirus saimiri genome.</title>
        <authorList>
            <person name="Albrecht J.-C."/>
            <person name="Nicholas J."/>
            <person name="Biller D."/>
            <person name="Cameron K.R."/>
            <person name="Biesinger B."/>
            <person name="Newman C."/>
            <person name="Wittmann S."/>
            <person name="Craxton M.A."/>
            <person name="Coleman H."/>
            <person name="Fleckenstein B."/>
            <person name="Honess R.W."/>
        </authorList>
    </citation>
    <scope>NUCLEOTIDE SEQUENCE [LARGE SCALE GENOMIC DNA]</scope>
</reference>
<reference key="2">
    <citation type="journal article" date="1992" name="Virology">
        <title>Analysis of nucleotide sequence of the rightmost 43 kbp of herpesvirus saimiri (HVS) L-DNA: general conservation of genetic organization between HVS and Epstein-Barr virus.</title>
        <authorList>
            <person name="Nicholas J."/>
            <person name="Cameron K.R."/>
            <person name="Coleman H."/>
            <person name="Newman C."/>
            <person name="Honess R.W."/>
        </authorList>
    </citation>
    <scope>NUCLEOTIDE SEQUENCE [GENOMIC DNA]</scope>
</reference>